<comment type="function">
    <text evidence="1">IGPS catalyzes the conversion of PRFAR and glutamine to IGP, AICAR and glutamate. The HisH subunit catalyzes the hydrolysis of glutamine to glutamate and ammonia as part of the synthesis of IGP and AICAR. The resulting ammonia molecule is channeled to the active site of HisF.</text>
</comment>
<comment type="catalytic activity">
    <reaction evidence="1">
        <text>5-[(5-phospho-1-deoxy-D-ribulos-1-ylimino)methylamino]-1-(5-phospho-beta-D-ribosyl)imidazole-4-carboxamide + L-glutamine = D-erythro-1-(imidazol-4-yl)glycerol 3-phosphate + 5-amino-1-(5-phospho-beta-D-ribosyl)imidazole-4-carboxamide + L-glutamate + H(+)</text>
        <dbReference type="Rhea" id="RHEA:24793"/>
        <dbReference type="ChEBI" id="CHEBI:15378"/>
        <dbReference type="ChEBI" id="CHEBI:29985"/>
        <dbReference type="ChEBI" id="CHEBI:58278"/>
        <dbReference type="ChEBI" id="CHEBI:58359"/>
        <dbReference type="ChEBI" id="CHEBI:58475"/>
        <dbReference type="ChEBI" id="CHEBI:58525"/>
        <dbReference type="EC" id="4.3.2.10"/>
    </reaction>
</comment>
<comment type="catalytic activity">
    <reaction evidence="1">
        <text>L-glutamine + H2O = L-glutamate + NH4(+)</text>
        <dbReference type="Rhea" id="RHEA:15889"/>
        <dbReference type="ChEBI" id="CHEBI:15377"/>
        <dbReference type="ChEBI" id="CHEBI:28938"/>
        <dbReference type="ChEBI" id="CHEBI:29985"/>
        <dbReference type="ChEBI" id="CHEBI:58359"/>
        <dbReference type="EC" id="3.5.1.2"/>
    </reaction>
</comment>
<comment type="pathway">
    <text evidence="1">Amino-acid biosynthesis; L-histidine biosynthesis; L-histidine from 5-phospho-alpha-D-ribose 1-diphosphate: step 5/9.</text>
</comment>
<comment type="subunit">
    <text evidence="1">Heterodimer of HisH and HisF.</text>
</comment>
<comment type="subcellular location">
    <subcellularLocation>
        <location evidence="1">Cytoplasm</location>
    </subcellularLocation>
</comment>
<proteinExistence type="inferred from homology"/>
<reference key="1">
    <citation type="journal article" date="2003" name="Proc. Natl. Acad. Sci. U.S.A.">
        <title>The genome sequence of Blochmannia floridanus: comparative analysis of reduced genomes.</title>
        <authorList>
            <person name="Gil R."/>
            <person name="Silva F.J."/>
            <person name="Zientz E."/>
            <person name="Delmotte F."/>
            <person name="Gonzalez-Candelas F."/>
            <person name="Latorre A."/>
            <person name="Rausell C."/>
            <person name="Kamerbeek J."/>
            <person name="Gadau J."/>
            <person name="Hoelldobler B."/>
            <person name="van Ham R.C.H.J."/>
            <person name="Gross R."/>
            <person name="Moya A."/>
        </authorList>
    </citation>
    <scope>NUCLEOTIDE SEQUENCE [LARGE SCALE GENOMIC DNA]</scope>
</reference>
<protein>
    <recommendedName>
        <fullName evidence="1">Imidazole glycerol phosphate synthase subunit HisH</fullName>
        <ecNumber evidence="1">4.3.2.10</ecNumber>
    </recommendedName>
    <alternativeName>
        <fullName evidence="1">IGP synthase glutaminase subunit</fullName>
        <ecNumber evidence="1">3.5.1.2</ecNumber>
    </alternativeName>
    <alternativeName>
        <fullName evidence="1">IGP synthase subunit HisH</fullName>
    </alternativeName>
    <alternativeName>
        <fullName evidence="1">ImGP synthase subunit HisH</fullName>
        <shortName evidence="1">IGPS subunit HisH</shortName>
    </alternativeName>
</protein>
<sequence>MKIIIINTNCSNLSSVKIMLNKLGCNTIITDDPDLIIQSDKILLPGVGTANTAMKQLKKKNLIQLIKKCTQPTLGICLGMQLFGSFSNENTHTNTLNIINVPVKHMYSPTLPIPHMGWNNITILKKHDLLNGINNNHYFYFAHSYCMELNYTTIAYTNYGQPFSSVIVYKNFFGVQFHPEKSSFSGEQLIKNFLEI</sequence>
<evidence type="ECO:0000255" key="1">
    <source>
        <dbReference type="HAMAP-Rule" id="MF_00278"/>
    </source>
</evidence>
<organism>
    <name type="scientific">Blochmanniella floridana</name>
    <dbReference type="NCBI Taxonomy" id="203907"/>
    <lineage>
        <taxon>Bacteria</taxon>
        <taxon>Pseudomonadati</taxon>
        <taxon>Pseudomonadota</taxon>
        <taxon>Gammaproteobacteria</taxon>
        <taxon>Enterobacterales</taxon>
        <taxon>Enterobacteriaceae</taxon>
        <taxon>ant endosymbionts</taxon>
        <taxon>Candidatus Blochmanniella</taxon>
    </lineage>
</organism>
<dbReference type="EC" id="4.3.2.10" evidence="1"/>
<dbReference type="EC" id="3.5.1.2" evidence="1"/>
<dbReference type="EMBL" id="BX248583">
    <property type="protein sequence ID" value="CAD83525.1"/>
    <property type="molecule type" value="Genomic_DNA"/>
</dbReference>
<dbReference type="SMR" id="Q7VQW7"/>
<dbReference type="STRING" id="203907.Bfl466"/>
<dbReference type="KEGG" id="bfl:Bfl466"/>
<dbReference type="eggNOG" id="COG0118">
    <property type="taxonomic scope" value="Bacteria"/>
</dbReference>
<dbReference type="HOGENOM" id="CLU_071837_0_0_6"/>
<dbReference type="OrthoDB" id="9807137at2"/>
<dbReference type="UniPathway" id="UPA00031">
    <property type="reaction ID" value="UER00010"/>
</dbReference>
<dbReference type="Proteomes" id="UP000002192">
    <property type="component" value="Chromosome"/>
</dbReference>
<dbReference type="GO" id="GO:0005737">
    <property type="term" value="C:cytoplasm"/>
    <property type="evidence" value="ECO:0007669"/>
    <property type="project" value="UniProtKB-SubCell"/>
</dbReference>
<dbReference type="GO" id="GO:0004359">
    <property type="term" value="F:glutaminase activity"/>
    <property type="evidence" value="ECO:0007669"/>
    <property type="project" value="UniProtKB-EC"/>
</dbReference>
<dbReference type="GO" id="GO:0000107">
    <property type="term" value="F:imidazoleglycerol-phosphate synthase activity"/>
    <property type="evidence" value="ECO:0007669"/>
    <property type="project" value="UniProtKB-UniRule"/>
</dbReference>
<dbReference type="GO" id="GO:0016829">
    <property type="term" value="F:lyase activity"/>
    <property type="evidence" value="ECO:0007669"/>
    <property type="project" value="UniProtKB-KW"/>
</dbReference>
<dbReference type="GO" id="GO:0000105">
    <property type="term" value="P:L-histidine biosynthetic process"/>
    <property type="evidence" value="ECO:0007669"/>
    <property type="project" value="UniProtKB-UniRule"/>
</dbReference>
<dbReference type="CDD" id="cd01748">
    <property type="entry name" value="GATase1_IGP_Synthase"/>
    <property type="match status" value="1"/>
</dbReference>
<dbReference type="FunFam" id="3.40.50.880:FF:000009">
    <property type="entry name" value="Imidazole glycerol phosphate synthase subunit HisH"/>
    <property type="match status" value="1"/>
</dbReference>
<dbReference type="Gene3D" id="3.40.50.880">
    <property type="match status" value="1"/>
</dbReference>
<dbReference type="HAMAP" id="MF_00278">
    <property type="entry name" value="HisH"/>
    <property type="match status" value="1"/>
</dbReference>
<dbReference type="InterPro" id="IPR029062">
    <property type="entry name" value="Class_I_gatase-like"/>
</dbReference>
<dbReference type="InterPro" id="IPR017926">
    <property type="entry name" value="GATASE"/>
</dbReference>
<dbReference type="InterPro" id="IPR010139">
    <property type="entry name" value="Imidazole-glycPsynth_HisH"/>
</dbReference>
<dbReference type="NCBIfam" id="TIGR01855">
    <property type="entry name" value="IMP_synth_hisH"/>
    <property type="match status" value="1"/>
</dbReference>
<dbReference type="PANTHER" id="PTHR42701">
    <property type="entry name" value="IMIDAZOLE GLYCEROL PHOSPHATE SYNTHASE SUBUNIT HISH"/>
    <property type="match status" value="1"/>
</dbReference>
<dbReference type="PANTHER" id="PTHR42701:SF1">
    <property type="entry name" value="IMIDAZOLE GLYCEROL PHOSPHATE SYNTHASE SUBUNIT HISH"/>
    <property type="match status" value="1"/>
</dbReference>
<dbReference type="Pfam" id="PF00117">
    <property type="entry name" value="GATase"/>
    <property type="match status" value="1"/>
</dbReference>
<dbReference type="PIRSF" id="PIRSF000495">
    <property type="entry name" value="Amidotransf_hisH"/>
    <property type="match status" value="1"/>
</dbReference>
<dbReference type="SUPFAM" id="SSF52317">
    <property type="entry name" value="Class I glutamine amidotransferase-like"/>
    <property type="match status" value="1"/>
</dbReference>
<dbReference type="PROSITE" id="PS51273">
    <property type="entry name" value="GATASE_TYPE_1"/>
    <property type="match status" value="1"/>
</dbReference>
<name>HIS5_BLOFL</name>
<feature type="chain" id="PRO_0000152363" description="Imidazole glycerol phosphate synthase subunit HisH">
    <location>
        <begin position="1"/>
        <end position="196"/>
    </location>
</feature>
<feature type="domain" description="Glutamine amidotransferase type-1" evidence="1">
    <location>
        <begin position="2"/>
        <end position="196"/>
    </location>
</feature>
<feature type="active site" description="Nucleophile" evidence="1">
    <location>
        <position position="77"/>
    </location>
</feature>
<feature type="active site" evidence="1">
    <location>
        <position position="178"/>
    </location>
</feature>
<feature type="active site" evidence="1">
    <location>
        <position position="180"/>
    </location>
</feature>
<keyword id="KW-0028">Amino-acid biosynthesis</keyword>
<keyword id="KW-0963">Cytoplasm</keyword>
<keyword id="KW-0315">Glutamine amidotransferase</keyword>
<keyword id="KW-0368">Histidine biosynthesis</keyword>
<keyword id="KW-0378">Hydrolase</keyword>
<keyword id="KW-0456">Lyase</keyword>
<keyword id="KW-1185">Reference proteome</keyword>
<gene>
    <name evidence="1" type="primary">hisH</name>
    <name type="ordered locus">Bfl466</name>
</gene>
<accession>Q7VQW7</accession>